<feature type="chain" id="PRO_0000262777" description="4-hydroxybenzoate octaprenyltransferase">
    <location>
        <begin position="1"/>
        <end position="293"/>
    </location>
</feature>
<feature type="transmembrane region" description="Helical" evidence="1">
    <location>
        <begin position="25"/>
        <end position="45"/>
    </location>
</feature>
<feature type="transmembrane region" description="Helical" evidence="1">
    <location>
        <begin position="48"/>
        <end position="68"/>
    </location>
</feature>
<feature type="transmembrane region" description="Helical" evidence="1">
    <location>
        <begin position="101"/>
        <end position="121"/>
    </location>
</feature>
<feature type="transmembrane region" description="Helical" evidence="1">
    <location>
        <begin position="142"/>
        <end position="162"/>
    </location>
</feature>
<feature type="transmembrane region" description="Helical" evidence="1">
    <location>
        <begin position="165"/>
        <end position="185"/>
    </location>
</feature>
<feature type="transmembrane region" description="Helical" evidence="1">
    <location>
        <begin position="223"/>
        <end position="243"/>
    </location>
</feature>
<feature type="transmembrane region" description="Helical" evidence="1">
    <location>
        <begin position="271"/>
        <end position="291"/>
    </location>
</feature>
<reference key="1">
    <citation type="submission" date="2006-08" db="EMBL/GenBank/DDBJ databases">
        <title>Complete sequence of Alkalilimnicola ehrilichei MLHE-1.</title>
        <authorList>
            <person name="Copeland A."/>
            <person name="Lucas S."/>
            <person name="Lapidus A."/>
            <person name="Barry K."/>
            <person name="Detter J.C."/>
            <person name="Glavina del Rio T."/>
            <person name="Hammon N."/>
            <person name="Israni S."/>
            <person name="Dalin E."/>
            <person name="Tice H."/>
            <person name="Pitluck S."/>
            <person name="Sims D."/>
            <person name="Brettin T."/>
            <person name="Bruce D."/>
            <person name="Han C."/>
            <person name="Tapia R."/>
            <person name="Gilna P."/>
            <person name="Schmutz J."/>
            <person name="Larimer F."/>
            <person name="Land M."/>
            <person name="Hauser L."/>
            <person name="Kyrpides N."/>
            <person name="Mikhailova N."/>
            <person name="Oremland R.S."/>
            <person name="Hoeft S.E."/>
            <person name="Switzer-Blum J."/>
            <person name="Kulp T."/>
            <person name="King G."/>
            <person name="Tabita R."/>
            <person name="Witte B."/>
            <person name="Santini J.M."/>
            <person name="Basu P."/>
            <person name="Hollibaugh J.T."/>
            <person name="Xie G."/>
            <person name="Stolz J.F."/>
            <person name="Richardson P."/>
        </authorList>
    </citation>
    <scope>NUCLEOTIDE SEQUENCE [LARGE SCALE GENOMIC DNA]</scope>
    <source>
        <strain>ATCC BAA-1101 / DSM 17681 / MLHE-1</strain>
    </source>
</reference>
<accession>Q0A5V9</accession>
<comment type="function">
    <text evidence="1">Catalyzes the prenylation of para-hydroxybenzoate (PHB) with an all-trans polyprenyl group. Mediates the second step in the final reaction sequence of ubiquinone-8 (UQ-8) biosynthesis, which is the condensation of the polyisoprenoid side chain with PHB, generating the first membrane-bound Q intermediate 3-octaprenyl-4-hydroxybenzoate.</text>
</comment>
<comment type="catalytic activity">
    <reaction evidence="1">
        <text>all-trans-octaprenyl diphosphate + 4-hydroxybenzoate = 4-hydroxy-3-(all-trans-octaprenyl)benzoate + diphosphate</text>
        <dbReference type="Rhea" id="RHEA:27782"/>
        <dbReference type="ChEBI" id="CHEBI:1617"/>
        <dbReference type="ChEBI" id="CHEBI:17879"/>
        <dbReference type="ChEBI" id="CHEBI:33019"/>
        <dbReference type="ChEBI" id="CHEBI:57711"/>
        <dbReference type="EC" id="2.5.1.39"/>
    </reaction>
</comment>
<comment type="cofactor">
    <cofactor evidence="1">
        <name>Mg(2+)</name>
        <dbReference type="ChEBI" id="CHEBI:18420"/>
    </cofactor>
</comment>
<comment type="pathway">
    <text evidence="1">Cofactor biosynthesis; ubiquinone biosynthesis.</text>
</comment>
<comment type="subcellular location">
    <subcellularLocation>
        <location evidence="1">Cell inner membrane</location>
        <topology evidence="1">Multi-pass membrane protein</topology>
    </subcellularLocation>
</comment>
<comment type="similarity">
    <text evidence="1">Belongs to the UbiA prenyltransferase family.</text>
</comment>
<evidence type="ECO:0000255" key="1">
    <source>
        <dbReference type="HAMAP-Rule" id="MF_01635"/>
    </source>
</evidence>
<sequence length="293" mass="32398">MEMTADYLRDRAWQYAQLTRLNRPIGNFLLLWPMLWGLWIAAKGLPDLKVLVVFVLGVLIMRAAGCVINDYADRDFDGHVKRTTHRPMANGRVSEREALTLFVVLCLVAFGLVLLMNPLTIALSLVAVALAATYPFMKRYTHFPQVHLGAAFGWAIPMAFAAQTGAVAPVAWLLFLSAVLWATIYDTQYAMVDRDDDLKIGVKSTAVLFGQADRAIIGVLQGVMLAVLVAAGLVVGLGAFWYLGLAAAAALFAYQQWLIRERRREDCFRAFLNNNWLGGLIFLGLLLDLHLGG</sequence>
<gene>
    <name evidence="1" type="primary">ubiA</name>
    <name type="ordered locus">Mlg_2438</name>
</gene>
<name>UBIA_ALKEH</name>
<keyword id="KW-0997">Cell inner membrane</keyword>
<keyword id="KW-1003">Cell membrane</keyword>
<keyword id="KW-0460">Magnesium</keyword>
<keyword id="KW-0472">Membrane</keyword>
<keyword id="KW-1185">Reference proteome</keyword>
<keyword id="KW-0808">Transferase</keyword>
<keyword id="KW-0812">Transmembrane</keyword>
<keyword id="KW-1133">Transmembrane helix</keyword>
<keyword id="KW-0831">Ubiquinone biosynthesis</keyword>
<dbReference type="EC" id="2.5.1.39" evidence="1"/>
<dbReference type="EMBL" id="CP000453">
    <property type="protein sequence ID" value="ABI57778.1"/>
    <property type="molecule type" value="Genomic_DNA"/>
</dbReference>
<dbReference type="RefSeq" id="WP_011630171.1">
    <property type="nucleotide sequence ID" value="NC_008340.1"/>
</dbReference>
<dbReference type="SMR" id="Q0A5V9"/>
<dbReference type="KEGG" id="aeh:Mlg_2438"/>
<dbReference type="eggNOG" id="COG0382">
    <property type="taxonomic scope" value="Bacteria"/>
</dbReference>
<dbReference type="HOGENOM" id="CLU_034879_1_0_6"/>
<dbReference type="OrthoDB" id="9782418at2"/>
<dbReference type="UniPathway" id="UPA00232"/>
<dbReference type="Proteomes" id="UP000001962">
    <property type="component" value="Chromosome"/>
</dbReference>
<dbReference type="GO" id="GO:0005886">
    <property type="term" value="C:plasma membrane"/>
    <property type="evidence" value="ECO:0007669"/>
    <property type="project" value="UniProtKB-SubCell"/>
</dbReference>
<dbReference type="GO" id="GO:0008412">
    <property type="term" value="F:4-hydroxybenzoate polyprenyltransferase activity"/>
    <property type="evidence" value="ECO:0007669"/>
    <property type="project" value="UniProtKB-UniRule"/>
</dbReference>
<dbReference type="GO" id="GO:0006744">
    <property type="term" value="P:ubiquinone biosynthetic process"/>
    <property type="evidence" value="ECO:0007669"/>
    <property type="project" value="UniProtKB-UniRule"/>
</dbReference>
<dbReference type="CDD" id="cd13959">
    <property type="entry name" value="PT_UbiA_COQ2"/>
    <property type="match status" value="1"/>
</dbReference>
<dbReference type="FunFam" id="1.10.357.140:FF:000002">
    <property type="entry name" value="4-hydroxybenzoate octaprenyltransferase"/>
    <property type="match status" value="1"/>
</dbReference>
<dbReference type="FunFam" id="1.20.120.1780:FF:000001">
    <property type="entry name" value="4-hydroxybenzoate octaprenyltransferase"/>
    <property type="match status" value="1"/>
</dbReference>
<dbReference type="Gene3D" id="1.10.357.140">
    <property type="entry name" value="UbiA prenyltransferase"/>
    <property type="match status" value="1"/>
</dbReference>
<dbReference type="Gene3D" id="1.20.120.1780">
    <property type="entry name" value="UbiA prenyltransferase"/>
    <property type="match status" value="1"/>
</dbReference>
<dbReference type="HAMAP" id="MF_01635">
    <property type="entry name" value="UbiA"/>
    <property type="match status" value="1"/>
</dbReference>
<dbReference type="InterPro" id="IPR006370">
    <property type="entry name" value="HB_polyprenyltransferase-like"/>
</dbReference>
<dbReference type="InterPro" id="IPR039653">
    <property type="entry name" value="Prenyltransferase"/>
</dbReference>
<dbReference type="InterPro" id="IPR000537">
    <property type="entry name" value="UbiA_prenyltransferase"/>
</dbReference>
<dbReference type="InterPro" id="IPR030470">
    <property type="entry name" value="UbiA_prenylTrfase_CS"/>
</dbReference>
<dbReference type="InterPro" id="IPR044878">
    <property type="entry name" value="UbiA_sf"/>
</dbReference>
<dbReference type="NCBIfam" id="TIGR01474">
    <property type="entry name" value="ubiA_proteo"/>
    <property type="match status" value="1"/>
</dbReference>
<dbReference type="PANTHER" id="PTHR11048:SF28">
    <property type="entry name" value="4-HYDROXYBENZOATE POLYPRENYLTRANSFERASE, MITOCHONDRIAL"/>
    <property type="match status" value="1"/>
</dbReference>
<dbReference type="PANTHER" id="PTHR11048">
    <property type="entry name" value="PRENYLTRANSFERASES"/>
    <property type="match status" value="1"/>
</dbReference>
<dbReference type="Pfam" id="PF01040">
    <property type="entry name" value="UbiA"/>
    <property type="match status" value="1"/>
</dbReference>
<dbReference type="PROSITE" id="PS00943">
    <property type="entry name" value="UBIA"/>
    <property type="match status" value="1"/>
</dbReference>
<protein>
    <recommendedName>
        <fullName evidence="1">4-hydroxybenzoate octaprenyltransferase</fullName>
        <ecNumber evidence="1">2.5.1.39</ecNumber>
    </recommendedName>
    <alternativeName>
        <fullName evidence="1">4-HB polyprenyltransferase</fullName>
    </alternativeName>
</protein>
<organism>
    <name type="scientific">Alkalilimnicola ehrlichii (strain ATCC BAA-1101 / DSM 17681 / MLHE-1)</name>
    <dbReference type="NCBI Taxonomy" id="187272"/>
    <lineage>
        <taxon>Bacteria</taxon>
        <taxon>Pseudomonadati</taxon>
        <taxon>Pseudomonadota</taxon>
        <taxon>Gammaproteobacteria</taxon>
        <taxon>Chromatiales</taxon>
        <taxon>Ectothiorhodospiraceae</taxon>
        <taxon>Alkalilimnicola</taxon>
    </lineage>
</organism>
<proteinExistence type="inferred from homology"/>